<proteinExistence type="inferred from homology"/>
<reference key="1">
    <citation type="journal article" date="2003" name="Nat. Genet.">
        <title>Comparative analysis of the genome sequences of Bordetella pertussis, Bordetella parapertussis and Bordetella bronchiseptica.</title>
        <authorList>
            <person name="Parkhill J."/>
            <person name="Sebaihia M."/>
            <person name="Preston A."/>
            <person name="Murphy L.D."/>
            <person name="Thomson N.R."/>
            <person name="Harris D.E."/>
            <person name="Holden M.T.G."/>
            <person name="Churcher C.M."/>
            <person name="Bentley S.D."/>
            <person name="Mungall K.L."/>
            <person name="Cerdeno-Tarraga A.-M."/>
            <person name="Temple L."/>
            <person name="James K.D."/>
            <person name="Harris B."/>
            <person name="Quail M.A."/>
            <person name="Achtman M."/>
            <person name="Atkin R."/>
            <person name="Baker S."/>
            <person name="Basham D."/>
            <person name="Bason N."/>
            <person name="Cherevach I."/>
            <person name="Chillingworth T."/>
            <person name="Collins M."/>
            <person name="Cronin A."/>
            <person name="Davis P."/>
            <person name="Doggett J."/>
            <person name="Feltwell T."/>
            <person name="Goble A."/>
            <person name="Hamlin N."/>
            <person name="Hauser H."/>
            <person name="Holroyd S."/>
            <person name="Jagels K."/>
            <person name="Leather S."/>
            <person name="Moule S."/>
            <person name="Norberczak H."/>
            <person name="O'Neil S."/>
            <person name="Ormond D."/>
            <person name="Price C."/>
            <person name="Rabbinowitsch E."/>
            <person name="Rutter S."/>
            <person name="Sanders M."/>
            <person name="Saunders D."/>
            <person name="Seeger K."/>
            <person name="Sharp S."/>
            <person name="Simmonds M."/>
            <person name="Skelton J."/>
            <person name="Squares R."/>
            <person name="Squares S."/>
            <person name="Stevens K."/>
            <person name="Unwin L."/>
            <person name="Whitehead S."/>
            <person name="Barrell B.G."/>
            <person name="Maskell D.J."/>
        </authorList>
    </citation>
    <scope>NUCLEOTIDE SEQUENCE [LARGE SCALE GENOMIC DNA]</scope>
    <source>
        <strain>Tohama I / ATCC BAA-589 / NCTC 13251</strain>
    </source>
</reference>
<sequence>MLIPLARAVLALELLGAGAAHAERLKDLASIQGVRGNQLIGYGLVVGLDGSGDQVRQTLFTQQSLTNMLSQLGITVPQGSNMQLKNVAAVMVTATLPSFARPGQTVDVVVSSMGNAKSLRGGTLLMTPLKGADNQVYVIAQGNLLVGGAGASAGGSSVQINQLNGGRISNGAIVERAVPTMYAQDGMVYLEMNNTDFGTTQNAATAINRQFGAGTAMALDGRVIQVRGPLDPSMMPAFMSQVENLQVARAPATAKVIINARTGSVVMNRTVMIEEAAVAHGNLSVIINRQNQVFQPDTPFTEGQTVVVPNTQIEVRQDGGALQRVTTSANLADVVKALNALGATPQDLLAILQAMKTAGALRADLEII</sequence>
<organism>
    <name type="scientific">Bordetella pertussis (strain Tohama I / ATCC BAA-589 / NCTC 13251)</name>
    <dbReference type="NCBI Taxonomy" id="257313"/>
    <lineage>
        <taxon>Bacteria</taxon>
        <taxon>Pseudomonadati</taxon>
        <taxon>Pseudomonadota</taxon>
        <taxon>Betaproteobacteria</taxon>
        <taxon>Burkholderiales</taxon>
        <taxon>Alcaligenaceae</taxon>
        <taxon>Bordetella</taxon>
    </lineage>
</organism>
<gene>
    <name evidence="1" type="primary">flgI</name>
    <name type="ordered locus">BP1380</name>
</gene>
<keyword id="KW-0975">Bacterial flagellum</keyword>
<keyword id="KW-0574">Periplasm</keyword>
<keyword id="KW-1185">Reference proteome</keyword>
<keyword id="KW-0732">Signal</keyword>
<accession>Q7VYG2</accession>
<feature type="signal peptide" evidence="1">
    <location>
        <begin position="1"/>
        <end position="22"/>
    </location>
</feature>
<feature type="chain" id="PRO_0000041786" description="Flagellar P-ring protein">
    <location>
        <begin position="23"/>
        <end position="368"/>
    </location>
</feature>
<protein>
    <recommendedName>
        <fullName evidence="1">Flagellar P-ring protein</fullName>
    </recommendedName>
    <alternativeName>
        <fullName evidence="1">Basal body P-ring protein</fullName>
    </alternativeName>
</protein>
<dbReference type="EMBL" id="BX640415">
    <property type="protein sequence ID" value="CAE41671.1"/>
    <property type="status" value="ALT_INIT"/>
    <property type="molecule type" value="Genomic_DNA"/>
</dbReference>
<dbReference type="RefSeq" id="NP_880127.1">
    <property type="nucleotide sequence ID" value="NC_002929.2"/>
</dbReference>
<dbReference type="SMR" id="Q7VYG2"/>
<dbReference type="STRING" id="257313.BP1380"/>
<dbReference type="PaxDb" id="257313-BP1380"/>
<dbReference type="KEGG" id="bpe:BP1380"/>
<dbReference type="PATRIC" id="fig|257313.5.peg.1481"/>
<dbReference type="eggNOG" id="COG1706">
    <property type="taxonomic scope" value="Bacteria"/>
</dbReference>
<dbReference type="HOGENOM" id="CLU_045235_1_0_4"/>
<dbReference type="Proteomes" id="UP000002676">
    <property type="component" value="Chromosome"/>
</dbReference>
<dbReference type="GO" id="GO:0009428">
    <property type="term" value="C:bacterial-type flagellum basal body, distal rod, P ring"/>
    <property type="evidence" value="ECO:0007669"/>
    <property type="project" value="InterPro"/>
</dbReference>
<dbReference type="GO" id="GO:0030288">
    <property type="term" value="C:outer membrane-bounded periplasmic space"/>
    <property type="evidence" value="ECO:0007669"/>
    <property type="project" value="InterPro"/>
</dbReference>
<dbReference type="GO" id="GO:0005198">
    <property type="term" value="F:structural molecule activity"/>
    <property type="evidence" value="ECO:0007669"/>
    <property type="project" value="InterPro"/>
</dbReference>
<dbReference type="GO" id="GO:0071973">
    <property type="term" value="P:bacterial-type flagellum-dependent cell motility"/>
    <property type="evidence" value="ECO:0007669"/>
    <property type="project" value="InterPro"/>
</dbReference>
<dbReference type="HAMAP" id="MF_00416">
    <property type="entry name" value="FlgI"/>
    <property type="match status" value="1"/>
</dbReference>
<dbReference type="InterPro" id="IPR001782">
    <property type="entry name" value="Flag_FlgI"/>
</dbReference>
<dbReference type="NCBIfam" id="NF003676">
    <property type="entry name" value="PRK05303.1"/>
    <property type="match status" value="1"/>
</dbReference>
<dbReference type="PANTHER" id="PTHR30381">
    <property type="entry name" value="FLAGELLAR P-RING PERIPLASMIC PROTEIN FLGI"/>
    <property type="match status" value="1"/>
</dbReference>
<dbReference type="PANTHER" id="PTHR30381:SF0">
    <property type="entry name" value="FLAGELLAR P-RING PROTEIN"/>
    <property type="match status" value="1"/>
</dbReference>
<dbReference type="Pfam" id="PF02119">
    <property type="entry name" value="FlgI"/>
    <property type="match status" value="1"/>
</dbReference>
<dbReference type="PRINTS" id="PR01010">
    <property type="entry name" value="FLGPRINGFLGI"/>
</dbReference>
<comment type="function">
    <text evidence="1">Assembles around the rod to form the L-ring and probably protects the motor/basal body from shearing forces during rotation.</text>
</comment>
<comment type="subunit">
    <text evidence="1">The basal body constitutes a major portion of the flagellar organelle and consists of four rings (L,P,S, and M) mounted on a central rod.</text>
</comment>
<comment type="subcellular location">
    <subcellularLocation>
        <location evidence="1">Periplasm</location>
    </subcellularLocation>
    <subcellularLocation>
        <location evidence="1">Bacterial flagellum basal body</location>
    </subcellularLocation>
</comment>
<comment type="similarity">
    <text evidence="1">Belongs to the FlgI family.</text>
</comment>
<comment type="sequence caution" evidence="2">
    <conflict type="erroneous initiation">
        <sequence resource="EMBL-CDS" id="CAE41671"/>
    </conflict>
</comment>
<evidence type="ECO:0000255" key="1">
    <source>
        <dbReference type="HAMAP-Rule" id="MF_00416"/>
    </source>
</evidence>
<evidence type="ECO:0000305" key="2"/>
<name>FLGI_BORPE</name>